<reference key="1">
    <citation type="journal article" date="2007" name="FASEB J.">
        <title>LAPSER1 is a putative cytokinetic tumor suppressor that shows the same centrosome and midbody subcellular localization pattern as p80 katanin.</title>
        <authorList>
            <person name="Sudo H."/>
            <person name="Maru Y."/>
        </authorList>
    </citation>
    <scope>NUCLEOTIDE SEQUENCE [MRNA]</scope>
    <scope>FUNCTION</scope>
    <scope>INTERACTION WITH GAMMA-TUBULIN</scope>
    <scope>KIF23 AND KATNB1</scope>
    <scope>SUBCELLULAR LOCATION</scope>
    <source>
        <strain>Wistar</strain>
    </source>
</reference>
<reference key="2">
    <citation type="submission" date="2007-10" db="EMBL/GenBank/DDBJ databases">
        <title>ProSAPiP1, a novel PSD protein that links spar to the PDZ domain of ProSAP2/Shank3.</title>
        <authorList>
            <person name="Wendholt D."/>
            <person name="Spilker C."/>
            <person name="Schmitt A."/>
            <person name="Dolnik A."/>
            <person name="Smalla K.-H."/>
            <person name="Proepper C."/>
            <person name="Sobue K."/>
            <person name="Gundelfinger E.D."/>
            <person name="Kreutz M.R."/>
            <person name="Boeckers T.M."/>
        </authorList>
    </citation>
    <scope>NUCLEOTIDE SEQUENCE [MRNA]</scope>
    <source>
        <tissue>Brain</tissue>
    </source>
</reference>
<reference key="3">
    <citation type="journal article" date="2008" name="Hum. Mol. Genet.">
        <title>LAPSER1/LZTS2: a pluripotent tumor suppressor linked to the inhibition of katanin-mediated microtubule severing.</title>
        <authorList>
            <person name="Sudo H."/>
            <person name="Maru Y."/>
        </authorList>
    </citation>
    <scope>FUNCTION</scope>
    <scope>INTERACTION WITH KATNB1</scope>
    <scope>SUBCELLULAR LOCATION</scope>
</reference>
<reference key="4">
    <citation type="journal article" date="2012" name="Nat. Commun.">
        <title>Quantitative maps of protein phosphorylation sites across 14 different rat organs and tissues.</title>
        <authorList>
            <person name="Lundby A."/>
            <person name="Secher A."/>
            <person name="Lage K."/>
            <person name="Nordsborg N.B."/>
            <person name="Dmytriyev A."/>
            <person name="Lundby C."/>
            <person name="Olsen J.V."/>
        </authorList>
    </citation>
    <scope>PHOSPHORYLATION [LARGE SCALE ANALYSIS] AT SER-296</scope>
    <scope>IDENTIFICATION BY MASS SPECTROMETRY [LARGE SCALE ANALYSIS]</scope>
</reference>
<organism>
    <name type="scientific">Rattus norvegicus</name>
    <name type="common">Rat</name>
    <dbReference type="NCBI Taxonomy" id="10116"/>
    <lineage>
        <taxon>Eukaryota</taxon>
        <taxon>Metazoa</taxon>
        <taxon>Chordata</taxon>
        <taxon>Craniata</taxon>
        <taxon>Vertebrata</taxon>
        <taxon>Euteleostomi</taxon>
        <taxon>Mammalia</taxon>
        <taxon>Eutheria</taxon>
        <taxon>Euarchontoglires</taxon>
        <taxon>Glires</taxon>
        <taxon>Rodentia</taxon>
        <taxon>Myomorpha</taxon>
        <taxon>Muroidea</taxon>
        <taxon>Muridae</taxon>
        <taxon>Murinae</taxon>
        <taxon>Rattus</taxon>
    </lineage>
</organism>
<proteinExistence type="evidence at protein level"/>
<evidence type="ECO:0000250" key="1"/>
<evidence type="ECO:0000250" key="2">
    <source>
        <dbReference type="UniProtKB" id="Q91YU6"/>
    </source>
</evidence>
<evidence type="ECO:0000250" key="3">
    <source>
        <dbReference type="UniProtKB" id="Q9BRK4"/>
    </source>
</evidence>
<evidence type="ECO:0000255" key="4">
    <source>
        <dbReference type="HAMAP-Rule" id="MF_03026"/>
    </source>
</evidence>
<evidence type="ECO:0000256" key="5">
    <source>
        <dbReference type="SAM" id="MobiDB-lite"/>
    </source>
</evidence>
<evidence type="ECO:0000269" key="6">
    <source>
    </source>
</evidence>
<evidence type="ECO:0000269" key="7">
    <source>
    </source>
</evidence>
<evidence type="ECO:0007744" key="8">
    <source>
    </source>
</evidence>
<comment type="function">
    <text evidence="4 6 7">Negative regulator of katanin-mediated microtubule severing and release from the centrosome. Required for central spindle formation and the completion of cytokinesis. May negatively regulate axonal outgrowth by preventing the formation of microtubule bundles that are necessary for transport within the elongating axon. Negative regulator of the Wnt signaling pathway. Represses beta-catenin-mediated transcriptional activation by promoting the nuclear exclusion of beta-catenin.</text>
</comment>
<comment type="subunit">
    <text evidence="1 6 7">Interacts with CTNNB1 (By similarity). Interacts with KATNB1. Also interacts with gamma-tubulin and KIF23.</text>
</comment>
<comment type="subcellular location">
    <subcellularLocation>
        <location>Cytoplasm</location>
    </subcellularLocation>
    <subcellularLocation>
        <location>Cytoplasm</location>
        <location>Cytoskeleton</location>
        <location>Microtubule organizing center</location>
        <location>Centrosome</location>
    </subcellularLocation>
    <text>Preferentially localized to the mother centriole. Also localized to the midbody in cells undergoing cytokinesis. Within neurons, enriched in cell bodies and localized to branch points and the tips of axonal branches.</text>
</comment>
<comment type="similarity">
    <text evidence="4">Belongs to the LZTS2 family.</text>
</comment>
<protein>
    <recommendedName>
        <fullName evidence="4">Leucine zipper putative tumor suppressor 2</fullName>
    </recommendedName>
    <alternativeName>
        <fullName evidence="4">Protein LAPSER1</fullName>
    </alternativeName>
</protein>
<feature type="chain" id="PRO_0000367896" description="Leucine zipper putative tumor suppressor 2">
    <location>
        <begin position="1"/>
        <end position="670"/>
    </location>
</feature>
<feature type="region of interest" description="Required for centrosomal localization" evidence="1">
    <location>
        <begin position="1"/>
        <end position="333"/>
    </location>
</feature>
<feature type="region of interest" description="Disordered" evidence="5">
    <location>
        <begin position="1"/>
        <end position="52"/>
    </location>
</feature>
<feature type="region of interest" description="Disordered" evidence="5">
    <location>
        <begin position="92"/>
        <end position="131"/>
    </location>
</feature>
<feature type="region of interest" description="Disordered" evidence="5">
    <location>
        <begin position="150"/>
        <end position="323"/>
    </location>
</feature>
<feature type="region of interest" description="Sufficient for interaction with CTNNB1" evidence="1">
    <location>
        <begin position="448"/>
        <end position="670"/>
    </location>
</feature>
<feature type="region of interest" description="Sufficient for interaction with KATNB1 and for inhibition of katanin-mediated microtubule severing" evidence="1">
    <location>
        <begin position="451"/>
        <end position="670"/>
    </location>
</feature>
<feature type="coiled-coil region" evidence="4">
    <location>
        <begin position="329"/>
        <end position="650"/>
    </location>
</feature>
<feature type="short sequence motif" description="Nuclear export signal" evidence="4">
    <location>
        <begin position="632"/>
        <end position="641"/>
    </location>
</feature>
<feature type="compositionally biased region" description="Low complexity" evidence="5">
    <location>
        <begin position="187"/>
        <end position="199"/>
    </location>
</feature>
<feature type="compositionally biased region" description="Polar residues" evidence="5">
    <location>
        <begin position="213"/>
        <end position="233"/>
    </location>
</feature>
<feature type="compositionally biased region" description="Low complexity" evidence="5">
    <location>
        <begin position="242"/>
        <end position="251"/>
    </location>
</feature>
<feature type="compositionally biased region" description="Low complexity" evidence="5">
    <location>
        <begin position="260"/>
        <end position="310"/>
    </location>
</feature>
<feature type="compositionally biased region" description="Pro residues" evidence="5">
    <location>
        <begin position="311"/>
        <end position="321"/>
    </location>
</feature>
<feature type="modified residue" description="Phosphoserine" evidence="2">
    <location>
        <position position="249"/>
    </location>
</feature>
<feature type="modified residue" description="Phosphoserine" evidence="8">
    <location>
        <position position="296"/>
    </location>
</feature>
<feature type="modified residue" description="Phosphoserine" evidence="3">
    <location>
        <position position="571"/>
    </location>
</feature>
<gene>
    <name type="primary">Lzts2</name>
    <name type="synonym">Lapser1</name>
</gene>
<name>LZTS2_RAT</name>
<dbReference type="EMBL" id="AY928801">
    <property type="protein sequence ID" value="AAX28869.1"/>
    <property type="molecule type" value="mRNA"/>
</dbReference>
<dbReference type="EMBL" id="DQ176638">
    <property type="protein sequence ID" value="ABA06435.2"/>
    <property type="molecule type" value="mRNA"/>
</dbReference>
<dbReference type="RefSeq" id="NP_001014269.2">
    <property type="nucleotide sequence ID" value="NM_001014247.2"/>
</dbReference>
<dbReference type="SMR" id="Q3LUD4"/>
<dbReference type="FunCoup" id="Q3LUD4">
    <property type="interactions" value="782"/>
</dbReference>
<dbReference type="STRING" id="10116.ENSRNOP00000042095"/>
<dbReference type="iPTMnet" id="Q3LUD4"/>
<dbReference type="PhosphoSitePlus" id="Q3LUD4"/>
<dbReference type="PaxDb" id="10116-ENSRNOP00000042095"/>
<dbReference type="GeneID" id="365468"/>
<dbReference type="KEGG" id="rno:365468"/>
<dbReference type="AGR" id="RGD:1359249"/>
<dbReference type="CTD" id="84445"/>
<dbReference type="RGD" id="1359249">
    <property type="gene designation" value="Lzts2"/>
</dbReference>
<dbReference type="eggNOG" id="ENOG502QWFS">
    <property type="taxonomic scope" value="Eukaryota"/>
</dbReference>
<dbReference type="InParanoid" id="Q3LUD4"/>
<dbReference type="PhylomeDB" id="Q3LUD4"/>
<dbReference type="PRO" id="PR:Q3LUD4"/>
<dbReference type="Proteomes" id="UP000002494">
    <property type="component" value="Unplaced"/>
</dbReference>
<dbReference type="GO" id="GO:0005813">
    <property type="term" value="C:centrosome"/>
    <property type="evidence" value="ECO:0000314"/>
    <property type="project" value="RGD"/>
</dbReference>
<dbReference type="GO" id="GO:0005737">
    <property type="term" value="C:cytoplasm"/>
    <property type="evidence" value="ECO:0000266"/>
    <property type="project" value="RGD"/>
</dbReference>
<dbReference type="GO" id="GO:0005874">
    <property type="term" value="C:microtubule"/>
    <property type="evidence" value="ECO:0007669"/>
    <property type="project" value="UniProtKB-KW"/>
</dbReference>
<dbReference type="GO" id="GO:0030496">
    <property type="term" value="C:midbody"/>
    <property type="evidence" value="ECO:0000314"/>
    <property type="project" value="RGD"/>
</dbReference>
<dbReference type="GO" id="GO:0097431">
    <property type="term" value="C:mitotic spindle pole"/>
    <property type="evidence" value="ECO:0000314"/>
    <property type="project" value="RGD"/>
</dbReference>
<dbReference type="GO" id="GO:0031982">
    <property type="term" value="C:vesicle"/>
    <property type="evidence" value="ECO:0000266"/>
    <property type="project" value="RGD"/>
</dbReference>
<dbReference type="GO" id="GO:0048144">
    <property type="term" value="P:fibroblast proliferation"/>
    <property type="evidence" value="ECO:0000266"/>
    <property type="project" value="RGD"/>
</dbReference>
<dbReference type="GO" id="GO:0001822">
    <property type="term" value="P:kidney development"/>
    <property type="evidence" value="ECO:0000266"/>
    <property type="project" value="RGD"/>
</dbReference>
<dbReference type="GO" id="GO:0051013">
    <property type="term" value="P:microtubule severing"/>
    <property type="evidence" value="ECO:0007669"/>
    <property type="project" value="UniProtKB-UniRule"/>
</dbReference>
<dbReference type="GO" id="GO:0000281">
    <property type="term" value="P:mitotic cytokinesis"/>
    <property type="evidence" value="ECO:0007669"/>
    <property type="project" value="UniProtKB-UniRule"/>
</dbReference>
<dbReference type="GO" id="GO:0090090">
    <property type="term" value="P:negative regulation of canonical Wnt signaling pathway"/>
    <property type="evidence" value="ECO:0000266"/>
    <property type="project" value="RGD"/>
</dbReference>
<dbReference type="GO" id="GO:0048147">
    <property type="term" value="P:negative regulation of fibroblast proliferation"/>
    <property type="evidence" value="ECO:0000314"/>
    <property type="project" value="RGD"/>
</dbReference>
<dbReference type="GO" id="GO:1900181">
    <property type="term" value="P:negative regulation of protein localization to nucleus"/>
    <property type="evidence" value="ECO:0000266"/>
    <property type="project" value="RGD"/>
</dbReference>
<dbReference type="GO" id="GO:0030178">
    <property type="term" value="P:negative regulation of Wnt signaling pathway"/>
    <property type="evidence" value="ECO:0000266"/>
    <property type="project" value="RGD"/>
</dbReference>
<dbReference type="GO" id="GO:0051168">
    <property type="term" value="P:nuclear export"/>
    <property type="evidence" value="ECO:0007669"/>
    <property type="project" value="UniProtKB-UniRule"/>
</dbReference>
<dbReference type="GO" id="GO:0043065">
    <property type="term" value="P:positive regulation of apoptotic process"/>
    <property type="evidence" value="ECO:0000314"/>
    <property type="project" value="RGD"/>
</dbReference>
<dbReference type="GO" id="GO:0060682">
    <property type="term" value="P:primary ureteric bud growth"/>
    <property type="evidence" value="ECO:0000266"/>
    <property type="project" value="RGD"/>
</dbReference>
<dbReference type="GO" id="GO:0051255">
    <property type="term" value="P:spindle midzone assembly"/>
    <property type="evidence" value="ECO:0007669"/>
    <property type="project" value="UniProtKB-UniRule"/>
</dbReference>
<dbReference type="GO" id="GO:0072197">
    <property type="term" value="P:ureter morphogenesis"/>
    <property type="evidence" value="ECO:0000266"/>
    <property type="project" value="RGD"/>
</dbReference>
<dbReference type="GO" id="GO:0016055">
    <property type="term" value="P:Wnt signaling pathway"/>
    <property type="evidence" value="ECO:0000266"/>
    <property type="project" value="RGD"/>
</dbReference>
<dbReference type="HAMAP" id="MF_03026">
    <property type="entry name" value="LZTS2"/>
    <property type="match status" value="1"/>
</dbReference>
<dbReference type="InterPro" id="IPR045329">
    <property type="entry name" value="LZTS"/>
</dbReference>
<dbReference type="InterPro" id="IPR028597">
    <property type="entry name" value="LZTS2"/>
</dbReference>
<dbReference type="PANTHER" id="PTHR19354">
    <property type="entry name" value="ZIPPER PUTATIVE TUMOR SUPPRESSOR 2 HOMOLOG-LIKE PROTEIN-RELATED"/>
    <property type="match status" value="1"/>
</dbReference>
<dbReference type="PANTHER" id="PTHR19354:SF4">
    <property type="entry name" value="ZIPPER PUTATIVE TUMOR SUPPRESSOR 2-RELATED"/>
    <property type="match status" value="1"/>
</dbReference>
<dbReference type="Pfam" id="PF06818">
    <property type="entry name" value="Fez1"/>
    <property type="match status" value="1"/>
</dbReference>
<sequence length="670" mass="72493">MAIVQTLPVPLEPARETATAPQTPAMGSVSSLISGRPCPGGPAPQRHHGVPGPTFFRQQDGLLRGGYEAQEPLCPAVPPRKTVPGNSFTYVNEDFRTESPPSPSSDVEDPREHQAHNAHLRGPPPKLIPVSGKLEKNMEKILIRPTAFKPVLPKPRGAPSLPGFLGPRAAGLSGSQGSLTQLFGGPASSSSSSSSSSAADKPLALSGWASGCPSGTLSDSGRNSLSSLPTYSTGGAEPTANSPGGHLPSHGPGRGPLPGPARGVPTGPSHSDSGRSSSSKSTGSLGARVAGGLLGSGARASPGSSSGGDRSPPPPPPPPPSDEALLHCVLEGKLRDREAELQQLRDSVDESEAAVCQAFGARQRRWPGEREDCASHAQQATQRVQRAQQLLQLQVFQLQQEKRQLQDDFAQLLQEREQLERRCATFEREQQELGPRLEETKWEVCQKSGEISLLKQQLKESQAELVQKGSELVALRVALREARAALRVSEGHARGLQEAARARELELEACSQELQRYRQEAEQLREKARHLDAEAAGLREPPVPPATTDPFLLAESDEAKVQRAAAGTGGSLRAQVERLRQELQREQRRGDEQRNSFEGERLAWQAEKEQVIRYQKQLQHNYVQMYRRNRQLEQELQQLSLELEARELADLGLSEPAPCICLEEITATEI</sequence>
<accession>Q3LUD4</accession>
<accession>Q24K74</accession>
<keyword id="KW-0131">Cell cycle</keyword>
<keyword id="KW-0132">Cell division</keyword>
<keyword id="KW-0175">Coiled coil</keyword>
<keyword id="KW-0963">Cytoplasm</keyword>
<keyword id="KW-0206">Cytoskeleton</keyword>
<keyword id="KW-0493">Microtubule</keyword>
<keyword id="KW-0498">Mitosis</keyword>
<keyword id="KW-0597">Phosphoprotein</keyword>
<keyword id="KW-1185">Reference proteome</keyword>
<keyword id="KW-0879">Wnt signaling pathway</keyword>